<organism>
    <name type="scientific">Citrobacter koseri (strain ATCC BAA-895 / CDC 4225-83 / SGSC4696)</name>
    <dbReference type="NCBI Taxonomy" id="290338"/>
    <lineage>
        <taxon>Bacteria</taxon>
        <taxon>Pseudomonadati</taxon>
        <taxon>Pseudomonadota</taxon>
        <taxon>Gammaproteobacteria</taxon>
        <taxon>Enterobacterales</taxon>
        <taxon>Enterobacteriaceae</taxon>
        <taxon>Citrobacter</taxon>
    </lineage>
</organism>
<proteinExistence type="inferred from homology"/>
<keyword id="KW-0378">Hydrolase</keyword>
<keyword id="KW-0460">Magnesium</keyword>
<keyword id="KW-1185">Reference proteome</keyword>
<feature type="chain" id="PRO_1000006545" description="Deoxyguanosinetriphosphate triphosphohydrolase">
    <location>
        <begin position="1"/>
        <end position="504"/>
    </location>
</feature>
<feature type="domain" description="HD" evidence="2">
    <location>
        <begin position="66"/>
        <end position="273"/>
    </location>
</feature>
<comment type="function">
    <text evidence="1">dGTPase preferentially hydrolyzes dGTP over the other canonical NTPs.</text>
</comment>
<comment type="catalytic activity">
    <reaction evidence="1">
        <text>dGTP + H2O = 2'-deoxyguanosine + triphosphate + H(+)</text>
        <dbReference type="Rhea" id="RHEA:15193"/>
        <dbReference type="ChEBI" id="CHEBI:15377"/>
        <dbReference type="ChEBI" id="CHEBI:15378"/>
        <dbReference type="ChEBI" id="CHEBI:17172"/>
        <dbReference type="ChEBI" id="CHEBI:18036"/>
        <dbReference type="ChEBI" id="CHEBI:61429"/>
        <dbReference type="EC" id="3.1.5.1"/>
    </reaction>
</comment>
<comment type="cofactor">
    <cofactor evidence="1">
        <name>Mg(2+)</name>
        <dbReference type="ChEBI" id="CHEBI:18420"/>
    </cofactor>
</comment>
<comment type="subunit">
    <text evidence="1">Homotetramer.</text>
</comment>
<comment type="similarity">
    <text evidence="1">Belongs to the dGTPase family. Type 1 subfamily.</text>
</comment>
<evidence type="ECO:0000255" key="1">
    <source>
        <dbReference type="HAMAP-Rule" id="MF_00030"/>
    </source>
</evidence>
<evidence type="ECO:0000255" key="2">
    <source>
        <dbReference type="PROSITE-ProRule" id="PRU01175"/>
    </source>
</evidence>
<gene>
    <name evidence="1" type="primary">dgt</name>
    <name type="ordered locus">CKO_03207</name>
</gene>
<reference key="1">
    <citation type="submission" date="2007-08" db="EMBL/GenBank/DDBJ databases">
        <authorList>
            <consortium name="The Citrobacter koseri Genome Sequencing Project"/>
            <person name="McClelland M."/>
            <person name="Sanderson E.K."/>
            <person name="Porwollik S."/>
            <person name="Spieth J."/>
            <person name="Clifton W.S."/>
            <person name="Latreille P."/>
            <person name="Courtney L."/>
            <person name="Wang C."/>
            <person name="Pepin K."/>
            <person name="Bhonagiri V."/>
            <person name="Nash W."/>
            <person name="Johnson M."/>
            <person name="Thiruvilangam P."/>
            <person name="Wilson R."/>
        </authorList>
    </citation>
    <scope>NUCLEOTIDE SEQUENCE [LARGE SCALE GENOMIC DNA]</scope>
    <source>
        <strain>ATCC BAA-895 / CDC 4225-83 / SGSC4696</strain>
    </source>
</reference>
<protein>
    <recommendedName>
        <fullName evidence="1">Deoxyguanosinetriphosphate triphosphohydrolase</fullName>
        <shortName evidence="1">dGTP triphosphohydrolase</shortName>
        <shortName evidence="1">dGTPase</shortName>
        <ecNumber evidence="1">3.1.5.1</ecNumber>
    </recommendedName>
</protein>
<dbReference type="EC" id="3.1.5.1" evidence="1"/>
<dbReference type="EMBL" id="CP000822">
    <property type="protein sequence ID" value="ABV14291.1"/>
    <property type="molecule type" value="Genomic_DNA"/>
</dbReference>
<dbReference type="RefSeq" id="WP_012133997.1">
    <property type="nucleotide sequence ID" value="NC_009792.1"/>
</dbReference>
<dbReference type="SMR" id="A8ALC8"/>
<dbReference type="STRING" id="290338.CKO_03207"/>
<dbReference type="GeneID" id="45136989"/>
<dbReference type="KEGG" id="cko:CKO_03207"/>
<dbReference type="HOGENOM" id="CLU_028163_2_1_6"/>
<dbReference type="OrthoDB" id="9803619at2"/>
<dbReference type="Proteomes" id="UP000008148">
    <property type="component" value="Chromosome"/>
</dbReference>
<dbReference type="GO" id="GO:0008832">
    <property type="term" value="F:dGTPase activity"/>
    <property type="evidence" value="ECO:0007669"/>
    <property type="project" value="UniProtKB-UniRule"/>
</dbReference>
<dbReference type="GO" id="GO:0000287">
    <property type="term" value="F:magnesium ion binding"/>
    <property type="evidence" value="ECO:0007669"/>
    <property type="project" value="UniProtKB-UniRule"/>
</dbReference>
<dbReference type="GO" id="GO:0006203">
    <property type="term" value="P:dGTP catabolic process"/>
    <property type="evidence" value="ECO:0007669"/>
    <property type="project" value="InterPro"/>
</dbReference>
<dbReference type="CDD" id="cd00077">
    <property type="entry name" value="HDc"/>
    <property type="match status" value="1"/>
</dbReference>
<dbReference type="FunFam" id="1.10.3210.10:FF:000009">
    <property type="entry name" value="Deoxyguanosinetriphosphate triphosphohydrolase"/>
    <property type="match status" value="1"/>
</dbReference>
<dbReference type="FunFam" id="1.10.3210.10:FF:000010">
    <property type="entry name" value="Deoxyguanosinetriphosphate triphosphohydrolase"/>
    <property type="match status" value="1"/>
</dbReference>
<dbReference type="FunFam" id="1.10.3410.10:FF:000001">
    <property type="entry name" value="Deoxyguanosinetriphosphate triphosphohydrolase"/>
    <property type="match status" value="1"/>
</dbReference>
<dbReference type="Gene3D" id="1.10.3210.10">
    <property type="entry name" value="Hypothetical protein af1432"/>
    <property type="match status" value="2"/>
</dbReference>
<dbReference type="Gene3D" id="1.10.3410.10">
    <property type="entry name" value="putative deoxyguanosinetriphosphate triphosphohydrolase like domain"/>
    <property type="match status" value="1"/>
</dbReference>
<dbReference type="HAMAP" id="MF_00030">
    <property type="entry name" value="dGTPase_type1"/>
    <property type="match status" value="1"/>
</dbReference>
<dbReference type="InterPro" id="IPR023293">
    <property type="entry name" value="dGTP_triP_hydro_central_sf"/>
</dbReference>
<dbReference type="InterPro" id="IPR006261">
    <property type="entry name" value="dGTPase"/>
</dbReference>
<dbReference type="InterPro" id="IPR050135">
    <property type="entry name" value="dGTPase-like"/>
</dbReference>
<dbReference type="InterPro" id="IPR020779">
    <property type="entry name" value="dNTPase_1"/>
</dbReference>
<dbReference type="InterPro" id="IPR003607">
    <property type="entry name" value="HD/PDEase_dom"/>
</dbReference>
<dbReference type="InterPro" id="IPR006674">
    <property type="entry name" value="HD_domain"/>
</dbReference>
<dbReference type="InterPro" id="IPR026875">
    <property type="entry name" value="PHydrolase_assoc_dom"/>
</dbReference>
<dbReference type="NCBIfam" id="TIGR01353">
    <property type="entry name" value="dGTP_triPase"/>
    <property type="match status" value="1"/>
</dbReference>
<dbReference type="NCBIfam" id="NF003429">
    <property type="entry name" value="PRK04926.1"/>
    <property type="match status" value="1"/>
</dbReference>
<dbReference type="PANTHER" id="PTHR11373:SF32">
    <property type="entry name" value="DEOXYGUANOSINETRIPHOSPHATE TRIPHOSPHOHYDROLASE"/>
    <property type="match status" value="1"/>
</dbReference>
<dbReference type="PANTHER" id="PTHR11373">
    <property type="entry name" value="DEOXYNUCLEOSIDE TRIPHOSPHATE TRIPHOSPHOHYDROLASE"/>
    <property type="match status" value="1"/>
</dbReference>
<dbReference type="Pfam" id="PF01966">
    <property type="entry name" value="HD"/>
    <property type="match status" value="1"/>
</dbReference>
<dbReference type="Pfam" id="PF13286">
    <property type="entry name" value="HD_assoc"/>
    <property type="match status" value="1"/>
</dbReference>
<dbReference type="SMART" id="SM00471">
    <property type="entry name" value="HDc"/>
    <property type="match status" value="1"/>
</dbReference>
<dbReference type="SUPFAM" id="SSF109604">
    <property type="entry name" value="HD-domain/PDEase-like"/>
    <property type="match status" value="1"/>
</dbReference>
<dbReference type="PROSITE" id="PS51831">
    <property type="entry name" value="HD"/>
    <property type="match status" value="1"/>
</dbReference>
<name>DGTP_CITK8</name>
<sequence length="504" mass="59299">MAQIDFRNKINWHRRYRSPQGVKTEHEILRIFESDRGRIINSPAIRRLQQKTQVFPLERNAAVRTRLTHSMEVQQVGRYIAKEILSRLKELKLLEQYGLDELTGPFESIVEMSCLMHDIGNPPFGHFGEAAINDWFRQRLHPADAESQPLSDDRCAVAALRLREGEESLNDIRRKVRQDLCHFEGNAQGIRLVHTLMRMNLTWAQVGGILKYTRPAWWRGETPATHRYLMKKPGYYLSEAPYIERLRKELALAPYSRFPLTWIMEAADDISYCVADLEDAVEKRIFSVEQLYHHLYEAWGHHEKGSLFTQVVENAWEKSRSNSLSRSTEDQFFMYLRVNTLNKLVPYAAQRFIDNLPQIFDGSFNHALLEDASSFSQLLELYKNVAIKHVFSHPDVEQLELQGYRVISGLLEIYQPLLRMSLVDFRELVEKERVKRFPIESRLFQKLSTRHRLAYVEAVSKLSPEAPEYPTLEYYYRCRLIQDYISGMTDLYAWDEYRRLMAVE</sequence>
<accession>A8ALC8</accession>